<proteinExistence type="inferred from homology"/>
<accession>Q8XC50</accession>
<gene>
    <name type="primary">nlpA</name>
    <name type="ordered locus">Z5147</name>
    <name type="ordered locus">ECs4595</name>
</gene>
<feature type="signal peptide" evidence="2">
    <location>
        <begin position="1"/>
        <end position="23"/>
    </location>
</feature>
<feature type="chain" id="PRO_0000019738" description="Lipoprotein 28" evidence="2">
    <location>
        <begin position="24"/>
        <end position="272"/>
    </location>
</feature>
<feature type="lipid moiety-binding region" description="N-palmitoyl cysteine" evidence="2">
    <location>
        <position position="24"/>
    </location>
</feature>
<feature type="lipid moiety-binding region" description="S-diacylglycerol cysteine" evidence="2">
    <location>
        <position position="24"/>
    </location>
</feature>
<comment type="subcellular location">
    <subcellularLocation>
        <location evidence="1">Cell inner membrane</location>
        <topology evidence="2">Lipid-anchor</topology>
    </subcellularLocation>
</comment>
<comment type="similarity">
    <text evidence="3">Belongs to the NlpA lipoprotein family.</text>
</comment>
<keyword id="KW-0997">Cell inner membrane</keyword>
<keyword id="KW-1003">Cell membrane</keyword>
<keyword id="KW-0449">Lipoprotein</keyword>
<keyword id="KW-0472">Membrane</keyword>
<keyword id="KW-0564">Palmitate</keyword>
<keyword id="KW-1185">Reference proteome</keyword>
<keyword id="KW-0732">Signal</keyword>
<protein>
    <recommendedName>
        <fullName>Lipoprotein 28</fullName>
    </recommendedName>
</protein>
<reference key="1">
    <citation type="journal article" date="2001" name="Nature">
        <title>Genome sequence of enterohaemorrhagic Escherichia coli O157:H7.</title>
        <authorList>
            <person name="Perna N.T."/>
            <person name="Plunkett G. III"/>
            <person name="Burland V."/>
            <person name="Mau B."/>
            <person name="Glasner J.D."/>
            <person name="Rose D.J."/>
            <person name="Mayhew G.F."/>
            <person name="Evans P.S."/>
            <person name="Gregor J."/>
            <person name="Kirkpatrick H.A."/>
            <person name="Posfai G."/>
            <person name="Hackett J."/>
            <person name="Klink S."/>
            <person name="Boutin A."/>
            <person name="Shao Y."/>
            <person name="Miller L."/>
            <person name="Grotbeck E.J."/>
            <person name="Davis N.W."/>
            <person name="Lim A."/>
            <person name="Dimalanta E.T."/>
            <person name="Potamousis K."/>
            <person name="Apodaca J."/>
            <person name="Anantharaman T.S."/>
            <person name="Lin J."/>
            <person name="Yen G."/>
            <person name="Schwartz D.C."/>
            <person name="Welch R.A."/>
            <person name="Blattner F.R."/>
        </authorList>
    </citation>
    <scope>NUCLEOTIDE SEQUENCE [LARGE SCALE GENOMIC DNA]</scope>
    <source>
        <strain>O157:H7 / EDL933 / ATCC 700927 / EHEC</strain>
    </source>
</reference>
<reference key="2">
    <citation type="journal article" date="2001" name="DNA Res.">
        <title>Complete genome sequence of enterohemorrhagic Escherichia coli O157:H7 and genomic comparison with a laboratory strain K-12.</title>
        <authorList>
            <person name="Hayashi T."/>
            <person name="Makino K."/>
            <person name="Ohnishi M."/>
            <person name="Kurokawa K."/>
            <person name="Ishii K."/>
            <person name="Yokoyama K."/>
            <person name="Han C.-G."/>
            <person name="Ohtsubo E."/>
            <person name="Nakayama K."/>
            <person name="Murata T."/>
            <person name="Tanaka M."/>
            <person name="Tobe T."/>
            <person name="Iida T."/>
            <person name="Takami H."/>
            <person name="Honda T."/>
            <person name="Sasakawa C."/>
            <person name="Ogasawara N."/>
            <person name="Yasunaga T."/>
            <person name="Kuhara S."/>
            <person name="Shiba T."/>
            <person name="Hattori M."/>
            <person name="Shinagawa H."/>
        </authorList>
    </citation>
    <scope>NUCLEOTIDE SEQUENCE [LARGE SCALE GENOMIC DNA]</scope>
    <source>
        <strain>O157:H7 / Sakai / RIMD 0509952 / EHEC</strain>
    </source>
</reference>
<sequence>MKLTTHHLRAGAALLLAGVLLAGCDQSSSDEKHIKVGVINGAEQDVAEVAKKVAKEKYGLDVELVGFSGSLLPNDATNNGELDANVFQHRPFLEQDNQTHGYKLVAVGNTFVFPMAGYSKKIKTVAQIKEGATVAIPNDPTNLGRALLLLQKEKLITLKEGKGLLPTALDITDNPRHLQIMELEGAQLPRVLDDPKVDVAIISTTYIEQTGLSPVNDSVFIEDKNSPYVNILVAREDNKNAENVKEFLQSYQSPEVAKAAETIFNGGAVPGW</sequence>
<dbReference type="EMBL" id="AE005174">
    <property type="protein sequence ID" value="AAG58856.1"/>
    <property type="molecule type" value="Genomic_DNA"/>
</dbReference>
<dbReference type="EMBL" id="BA000007">
    <property type="protein sequence ID" value="BAB38018.1"/>
    <property type="molecule type" value="Genomic_DNA"/>
</dbReference>
<dbReference type="PIR" id="C91203">
    <property type="entry name" value="C91203"/>
</dbReference>
<dbReference type="PIR" id="D86049">
    <property type="entry name" value="D86049"/>
</dbReference>
<dbReference type="RefSeq" id="NP_312622.1">
    <property type="nucleotide sequence ID" value="NC_002695.1"/>
</dbReference>
<dbReference type="RefSeq" id="WP_000779412.1">
    <property type="nucleotide sequence ID" value="NZ_VOAI01000011.1"/>
</dbReference>
<dbReference type="SMR" id="Q8XC50"/>
<dbReference type="STRING" id="155864.Z5147"/>
<dbReference type="GeneID" id="915435"/>
<dbReference type="KEGG" id="ece:Z5147"/>
<dbReference type="KEGG" id="ecs:ECs_4595"/>
<dbReference type="PATRIC" id="fig|386585.9.peg.4802"/>
<dbReference type="eggNOG" id="COG1464">
    <property type="taxonomic scope" value="Bacteria"/>
</dbReference>
<dbReference type="HOGENOM" id="CLU_067080_0_0_6"/>
<dbReference type="OMA" id="QDNKAHN"/>
<dbReference type="Proteomes" id="UP000000558">
    <property type="component" value="Chromosome"/>
</dbReference>
<dbReference type="Proteomes" id="UP000002519">
    <property type="component" value="Chromosome"/>
</dbReference>
<dbReference type="GO" id="GO:0005886">
    <property type="term" value="C:plasma membrane"/>
    <property type="evidence" value="ECO:0007669"/>
    <property type="project" value="UniProtKB-SubCell"/>
</dbReference>
<dbReference type="CDD" id="cd13598">
    <property type="entry name" value="PBP2_lipoprotein_IlpA_like"/>
    <property type="match status" value="1"/>
</dbReference>
<dbReference type="FunFam" id="3.40.190.10:FF:000016">
    <property type="entry name" value="Lipoprotein"/>
    <property type="match status" value="1"/>
</dbReference>
<dbReference type="Gene3D" id="3.40.190.10">
    <property type="entry name" value="Periplasmic binding protein-like II"/>
    <property type="match status" value="2"/>
</dbReference>
<dbReference type="InterPro" id="IPR004872">
    <property type="entry name" value="Lipoprotein_NlpA"/>
</dbReference>
<dbReference type="NCBIfam" id="TIGR00363">
    <property type="entry name" value="MetQ/NlpA family lipoprotein"/>
    <property type="match status" value="1"/>
</dbReference>
<dbReference type="NCBIfam" id="NF007364">
    <property type="entry name" value="PRK09861.1"/>
    <property type="match status" value="1"/>
</dbReference>
<dbReference type="NCBIfam" id="NF008285">
    <property type="entry name" value="PRK11063.1"/>
    <property type="match status" value="1"/>
</dbReference>
<dbReference type="PANTHER" id="PTHR30429">
    <property type="entry name" value="D-METHIONINE-BINDING LIPOPROTEIN METQ"/>
    <property type="match status" value="1"/>
</dbReference>
<dbReference type="PANTHER" id="PTHR30429:SF1">
    <property type="entry name" value="D-METHIONINE-BINDING LIPOPROTEIN METQ-RELATED"/>
    <property type="match status" value="1"/>
</dbReference>
<dbReference type="Pfam" id="PF03180">
    <property type="entry name" value="Lipoprotein_9"/>
    <property type="match status" value="1"/>
</dbReference>
<dbReference type="PIRSF" id="PIRSF002854">
    <property type="entry name" value="MetQ"/>
    <property type="match status" value="1"/>
</dbReference>
<dbReference type="SUPFAM" id="SSF53850">
    <property type="entry name" value="Periplasmic binding protein-like II"/>
    <property type="match status" value="1"/>
</dbReference>
<dbReference type="PROSITE" id="PS51257">
    <property type="entry name" value="PROKAR_LIPOPROTEIN"/>
    <property type="match status" value="1"/>
</dbReference>
<name>NLPA_ECO57</name>
<evidence type="ECO:0000250" key="1"/>
<evidence type="ECO:0000255" key="2">
    <source>
        <dbReference type="PROSITE-ProRule" id="PRU00303"/>
    </source>
</evidence>
<evidence type="ECO:0000305" key="3"/>
<organism>
    <name type="scientific">Escherichia coli O157:H7</name>
    <dbReference type="NCBI Taxonomy" id="83334"/>
    <lineage>
        <taxon>Bacteria</taxon>
        <taxon>Pseudomonadati</taxon>
        <taxon>Pseudomonadota</taxon>
        <taxon>Gammaproteobacteria</taxon>
        <taxon>Enterobacterales</taxon>
        <taxon>Enterobacteriaceae</taxon>
        <taxon>Escherichia</taxon>
    </lineage>
</organism>